<comment type="function">
    <text evidence="9 10">May be involved in axonal outgrowth as component of the network of molecules that regulate cellular morphology and axon guidance machinery. Able to restore partial locomotion and axonal fasciculation to C.elegans unc-76 mutants in germline transformation experiments. May participate in the transport of mitochondria and other cargos along microtubules.</text>
</comment>
<comment type="subunit">
    <text evidence="1 6 7 9 10 11">Homodimer; disulfide-linked. May form heterodimers with FEZ2. Interacts with the NH2-terminal variable region (V1) of PKC zeta and weakly with that of PKC epsilon (By similarity). Interacts with UBE4B. Interacts with SAP30L. Interacts with SCOC and ULK1; SCOC interferes with ULK1-binding to FEZ1. Directly interacts with SCOC and UVRAG. Stabilizes the interaction between SCOC and UVRAG during amino acid starvation.</text>
</comment>
<comment type="interaction">
    <interactant intactId="EBI-396435">
        <id>Q99689</id>
    </interactant>
    <interactant intactId="EBI-473176">
        <id>Q9P2H0</id>
        <label>CEP126</label>
    </interactant>
    <organismsDiffer>false</organismsDiffer>
    <experiments>2</experiments>
</comment>
<comment type="interaction">
    <interactant intactId="EBI-396435">
        <id>Q99689</id>
    </interactant>
    <interactant intactId="EBI-466029">
        <id>P42858</id>
        <label>HTT</label>
    </interactant>
    <organismsDiffer>false</organismsDiffer>
    <experiments>6</experiments>
</comment>
<comment type="interaction">
    <interactant intactId="EBI-396435">
        <id>Q99689</id>
    </interactant>
    <interactant intactId="EBI-373615">
        <id>Q96PY6</id>
        <label>NEK1</label>
    </interactant>
    <organismsDiffer>false</organismsDiffer>
    <experiments>2</experiments>
</comment>
<comment type="interaction">
    <interactant intactId="EBI-396435">
        <id>Q99689</id>
    </interactant>
    <interactant intactId="EBI-2686537">
        <id>Q9UIL1</id>
        <label>SCOC</label>
    </interactant>
    <organismsDiffer>false</organismsDiffer>
    <experiments>3</experiments>
</comment>
<comment type="interaction">
    <interactant intactId="EBI-396435">
        <id>Q99689</id>
    </interactant>
    <interactant intactId="EBI-707554">
        <id>O14530</id>
        <label>TXNDC9</label>
    </interactant>
    <organismsDiffer>false</organismsDiffer>
    <experiments>2</experiments>
</comment>
<comment type="interaction">
    <interactant intactId="EBI-396435">
        <id>Q99689</id>
    </interactant>
    <interactant intactId="EBI-102445">
        <id>P17210</id>
        <label>Khc</label>
    </interactant>
    <organismsDiffer>true</organismsDiffer>
    <experiments>3</experiments>
</comment>
<comment type="subcellular location">
    <subcellularLocation>
        <location evidence="8">Cytoplasm</location>
        <location evidence="8">Cytoskeleton</location>
        <location evidence="8">Microtubule organizing center</location>
        <location evidence="8">Centrosome</location>
    </subcellularLocation>
    <subcellularLocation>
        <location evidence="1">Cell membrane</location>
    </subcellularLocation>
    <text evidence="1">Colocalizes with both, alpha- and gamma-tubulin. Translocated from the plasma membrane to the cytoplasm by activation of the PKC zeta (By similarity).</text>
</comment>
<comment type="alternative products">
    <event type="alternative splicing"/>
    <isoform>
        <id>Q99689-1</id>
        <name>Long</name>
        <sequence type="displayed"/>
    </isoform>
    <isoform>
        <id>Q99689-2</id>
        <name>Short</name>
        <name>FEZ1-T</name>
        <sequence type="described" ref="VSP_006951"/>
    </isoform>
</comment>
<comment type="tissue specificity">
    <text>Mainly expressed in brain.</text>
</comment>
<comment type="PTM">
    <text evidence="6">Phosphorylated by protein kinase C zeta; which enhances interaction with UBE4B and polyubiquitination.</text>
</comment>
<comment type="PTM">
    <text evidence="6">Polyubiquitinated in a UBE4B-dependent manner; which does not lead to proteasomal degradation and may be important for neurogenic activity. Polyubiquitin linkage seems to be mainly through Lys-26.</text>
</comment>
<comment type="similarity">
    <text evidence="13">Belongs to the zygin family.</text>
</comment>
<feature type="chain" id="PRO_0000189525" description="Fasciculation and elongation protein zeta-1">
    <location>
        <begin position="1"/>
        <end position="392"/>
    </location>
</feature>
<feature type="region of interest" description="Disordered" evidence="5">
    <location>
        <begin position="1"/>
        <end position="37"/>
    </location>
</feature>
<feature type="region of interest" description="Disordered" evidence="5">
    <location>
        <begin position="175"/>
        <end position="198"/>
    </location>
</feature>
<feature type="coiled-coil region" evidence="4">
    <location>
        <begin position="230"/>
        <end position="298"/>
    </location>
</feature>
<feature type="compositionally biased region" description="Acidic residues" evidence="5">
    <location>
        <begin position="180"/>
        <end position="194"/>
    </location>
</feature>
<feature type="modified residue" description="Phosphoserine" evidence="3">
    <location>
        <position position="58"/>
    </location>
</feature>
<feature type="modified residue" description="Phosphoserine" evidence="2">
    <location>
        <position position="298"/>
    </location>
</feature>
<feature type="modified residue" description="Phosphoserine" evidence="3">
    <location>
        <position position="316"/>
    </location>
</feature>
<feature type="disulfide bond" description="Interchain" evidence="9">
    <location>
        <position position="133"/>
    </location>
</feature>
<feature type="splice variant" id="VSP_006951" description="In isoform Short." evidence="12">
    <location>
        <begin position="105"/>
        <end position="392"/>
    </location>
</feature>
<feature type="sequence variant" id="VAR_020461" description="In dbSNP:rs597570.">
    <original>D</original>
    <variation>E</variation>
    <location>
        <position position="123"/>
    </location>
</feature>
<feature type="mutagenesis site" description="No effect on SCOC--binding." evidence="10">
    <original>E</original>
    <variation>A</variation>
    <location>
        <position position="248"/>
    </location>
</feature>
<feature type="mutagenesis site" description="Loss of SCOC-binding. No effect on ULK1-binding." evidence="10">
    <original>L</original>
    <variation>P</variation>
    <location>
        <position position="254"/>
    </location>
</feature>
<feature type="mutagenesis site" description="Loss of SCOC-binding. No effect on ULK1-binding." evidence="10">
    <original>L</original>
    <variation>P</variation>
    <location>
        <position position="260"/>
    </location>
</feature>
<feature type="mutagenesis site" description="No effect on SCOC-binding." evidence="10">
    <original>K</original>
    <variation>A</variation>
    <location>
        <position position="264"/>
    </location>
</feature>
<sequence>MEAPLVSLDEEFEDLRPSCSEDPEEKPQCFYGSSPHHLEDPSLSELENFSSEIISFKSMEDLVNEFDEKLNVCFRNYNAKTENLAPVKNQLQIQEEEETLQDEEVWDALTDNYIPSLSEDWRDPNIEALNGNCSDTEIHEKEEEEFNEKSENDSGINEEPLLTADQVIEEIEEMMQNSPDPEEEEEVLEEEDGGETSSQADSVLLQEMQALTQTFNNNWSYEGLRHMSGSELTELLDQVEGAIRDFSEELVQQLARRDELEFEKEVKNSFITVLIEVQNKQKEQRELMKKRRKEKGLSLQSSRIEKGNQMPLKRFSMEGISNILQSGIRQTFGSSGTDKQYLNTVIPYEKKASPPSVEDLQMLTNILFAMKEDNEKVPTLLTDYILKVLCPT</sequence>
<proteinExistence type="evidence at protein level"/>
<gene>
    <name type="primary">FEZ1</name>
</gene>
<organism>
    <name type="scientific">Homo sapiens</name>
    <name type="common">Human</name>
    <dbReference type="NCBI Taxonomy" id="9606"/>
    <lineage>
        <taxon>Eukaryota</taxon>
        <taxon>Metazoa</taxon>
        <taxon>Chordata</taxon>
        <taxon>Craniata</taxon>
        <taxon>Vertebrata</taxon>
        <taxon>Euteleostomi</taxon>
        <taxon>Mammalia</taxon>
        <taxon>Eutheria</taxon>
        <taxon>Euarchontoglires</taxon>
        <taxon>Primates</taxon>
        <taxon>Haplorrhini</taxon>
        <taxon>Catarrhini</taxon>
        <taxon>Hominidae</taxon>
        <taxon>Homo</taxon>
    </lineage>
</organism>
<dbReference type="EMBL" id="U60060">
    <property type="protein sequence ID" value="AAC51282.1"/>
    <property type="molecule type" value="mRNA"/>
</dbReference>
<dbReference type="EMBL" id="U60062">
    <property type="protein sequence ID" value="AAC51284.1"/>
    <property type="molecule type" value="mRNA"/>
</dbReference>
<dbReference type="EMBL" id="U69139">
    <property type="protein sequence ID" value="AAB40660.1"/>
    <property type="molecule type" value="mRNA"/>
</dbReference>
<dbReference type="EMBL" id="CR456817">
    <property type="protein sequence ID" value="CAG33098.1"/>
    <property type="molecule type" value="mRNA"/>
</dbReference>
<dbReference type="EMBL" id="CR541954">
    <property type="protein sequence ID" value="CAG46752.1"/>
    <property type="molecule type" value="mRNA"/>
</dbReference>
<dbReference type="EMBL" id="BC009545">
    <property type="protein sequence ID" value="AAH09545.1"/>
    <property type="molecule type" value="mRNA"/>
</dbReference>
<dbReference type="CCDS" id="CCDS31716.1">
    <molecule id="Q99689-1"/>
</dbReference>
<dbReference type="CCDS" id="CCDS44758.1">
    <molecule id="Q99689-2"/>
</dbReference>
<dbReference type="RefSeq" id="NP_005094.1">
    <molecule id="Q99689-1"/>
    <property type="nucleotide sequence ID" value="NM_005103.5"/>
</dbReference>
<dbReference type="RefSeq" id="NP_072043.1">
    <molecule id="Q99689-2"/>
    <property type="nucleotide sequence ID" value="NM_022549.4"/>
</dbReference>
<dbReference type="RefSeq" id="XP_005271791.1">
    <molecule id="Q99689-1"/>
    <property type="nucleotide sequence ID" value="XM_005271734.3"/>
</dbReference>
<dbReference type="RefSeq" id="XP_005271792.1">
    <molecule id="Q99689-1"/>
    <property type="nucleotide sequence ID" value="XM_005271735.3"/>
</dbReference>
<dbReference type="RefSeq" id="XP_054226586.1">
    <molecule id="Q99689-1"/>
    <property type="nucleotide sequence ID" value="XM_054370611.1"/>
</dbReference>
<dbReference type="RefSeq" id="XP_054226587.1">
    <molecule id="Q99689-1"/>
    <property type="nucleotide sequence ID" value="XM_054370612.1"/>
</dbReference>
<dbReference type="BioGRID" id="114997">
    <property type="interactions" value="82"/>
</dbReference>
<dbReference type="CORUM" id="Q99689"/>
<dbReference type="DIP" id="DIP-32494N"/>
<dbReference type="FunCoup" id="Q99689">
    <property type="interactions" value="1069"/>
</dbReference>
<dbReference type="IntAct" id="Q99689">
    <property type="interactions" value="67"/>
</dbReference>
<dbReference type="MINT" id="Q99689"/>
<dbReference type="STRING" id="9606.ENSP00000497070"/>
<dbReference type="iPTMnet" id="Q99689"/>
<dbReference type="PhosphoSitePlus" id="Q99689"/>
<dbReference type="BioMuta" id="FEZ1"/>
<dbReference type="DMDM" id="13431526"/>
<dbReference type="jPOST" id="Q99689"/>
<dbReference type="MassIVE" id="Q99689"/>
<dbReference type="PaxDb" id="9606-ENSP00000278919"/>
<dbReference type="PeptideAtlas" id="Q99689"/>
<dbReference type="ProteomicsDB" id="78401">
    <molecule id="Q99689-1"/>
</dbReference>
<dbReference type="ProteomicsDB" id="78402">
    <molecule id="Q99689-2"/>
</dbReference>
<dbReference type="Antibodypedia" id="32949">
    <property type="antibodies" value="201 antibodies from 33 providers"/>
</dbReference>
<dbReference type="DNASU" id="9638"/>
<dbReference type="Ensembl" id="ENST00000278919.8">
    <molecule id="Q99689-1"/>
    <property type="protein sequence ID" value="ENSP00000278919.3"/>
    <property type="gene ID" value="ENSG00000149557.14"/>
</dbReference>
<dbReference type="Ensembl" id="ENST00000366139.3">
    <molecule id="Q99689-2"/>
    <property type="protein sequence ID" value="ENSP00000393425.2"/>
    <property type="gene ID" value="ENSG00000149557.14"/>
</dbReference>
<dbReference type="Ensembl" id="ENST00000524435.1">
    <molecule id="Q99689-2"/>
    <property type="protein sequence ID" value="ENSP00000431521.1"/>
    <property type="gene ID" value="ENSG00000149557.14"/>
</dbReference>
<dbReference type="Ensembl" id="ENST00000648911.1">
    <molecule id="Q99689-1"/>
    <property type="protein sequence ID" value="ENSP00000497070.1"/>
    <property type="gene ID" value="ENSG00000149557.14"/>
</dbReference>
<dbReference type="GeneID" id="9638"/>
<dbReference type="KEGG" id="hsa:9638"/>
<dbReference type="MANE-Select" id="ENST00000278919.8">
    <property type="protein sequence ID" value="ENSP00000278919.3"/>
    <property type="RefSeq nucleotide sequence ID" value="NM_005103.5"/>
    <property type="RefSeq protein sequence ID" value="NP_005094.1"/>
</dbReference>
<dbReference type="UCSC" id="uc001qbx.4">
    <molecule id="Q99689-1"/>
    <property type="organism name" value="human"/>
</dbReference>
<dbReference type="AGR" id="HGNC:3659"/>
<dbReference type="CTD" id="9638"/>
<dbReference type="DisGeNET" id="9638"/>
<dbReference type="GeneCards" id="FEZ1"/>
<dbReference type="HGNC" id="HGNC:3659">
    <property type="gene designation" value="FEZ1"/>
</dbReference>
<dbReference type="HPA" id="ENSG00000149557">
    <property type="expression patterns" value="Tissue enriched (brain)"/>
</dbReference>
<dbReference type="MIM" id="604825">
    <property type="type" value="gene"/>
</dbReference>
<dbReference type="neXtProt" id="NX_Q99689"/>
<dbReference type="OpenTargets" id="ENSG00000149557"/>
<dbReference type="PharmGKB" id="PA28100"/>
<dbReference type="VEuPathDB" id="HostDB:ENSG00000149557"/>
<dbReference type="eggNOG" id="KOG3919">
    <property type="taxonomic scope" value="Eukaryota"/>
</dbReference>
<dbReference type="GeneTree" id="ENSGT00390000017627"/>
<dbReference type="HOGENOM" id="CLU_041596_0_0_1"/>
<dbReference type="InParanoid" id="Q99689"/>
<dbReference type="OMA" id="MIGHHHG"/>
<dbReference type="OrthoDB" id="7959977at2759"/>
<dbReference type="PAN-GO" id="Q99689">
    <property type="GO annotations" value="2 GO annotations based on evolutionary models"/>
</dbReference>
<dbReference type="PhylomeDB" id="Q99689"/>
<dbReference type="TreeFam" id="TF313128"/>
<dbReference type="PathwayCommons" id="Q99689"/>
<dbReference type="SignaLink" id="Q99689"/>
<dbReference type="SIGNOR" id="Q99689"/>
<dbReference type="BioGRID-ORCS" id="9638">
    <property type="hits" value="10 hits in 1154 CRISPR screens"/>
</dbReference>
<dbReference type="CD-CODE" id="8C2F96ED">
    <property type="entry name" value="Centrosome"/>
</dbReference>
<dbReference type="ChiTaRS" id="FEZ1">
    <property type="organism name" value="human"/>
</dbReference>
<dbReference type="GeneWiki" id="FEZ1"/>
<dbReference type="GenomeRNAi" id="9638"/>
<dbReference type="Pharos" id="Q99689">
    <property type="development level" value="Tbio"/>
</dbReference>
<dbReference type="PRO" id="PR:Q99689"/>
<dbReference type="Proteomes" id="UP000005640">
    <property type="component" value="Chromosome 11"/>
</dbReference>
<dbReference type="RNAct" id="Q99689">
    <property type="molecule type" value="protein"/>
</dbReference>
<dbReference type="Bgee" id="ENSG00000149557">
    <property type="expression patterns" value="Expressed in inferior olivary complex and 190 other cell types or tissues"/>
</dbReference>
<dbReference type="ExpressionAtlas" id="Q99689">
    <property type="expression patterns" value="baseline and differential"/>
</dbReference>
<dbReference type="GO" id="GO:0030424">
    <property type="term" value="C:axon"/>
    <property type="evidence" value="ECO:0000318"/>
    <property type="project" value="GO_Central"/>
</dbReference>
<dbReference type="GO" id="GO:0005813">
    <property type="term" value="C:centrosome"/>
    <property type="evidence" value="ECO:0007669"/>
    <property type="project" value="UniProtKB-SubCell"/>
</dbReference>
<dbReference type="GO" id="GO:0005737">
    <property type="term" value="C:cytoplasm"/>
    <property type="evidence" value="ECO:0000318"/>
    <property type="project" value="GO_Central"/>
</dbReference>
<dbReference type="GO" id="GO:0030425">
    <property type="term" value="C:dendrite"/>
    <property type="evidence" value="ECO:0007669"/>
    <property type="project" value="Ensembl"/>
</dbReference>
<dbReference type="GO" id="GO:0005794">
    <property type="term" value="C:Golgi apparatus"/>
    <property type="evidence" value="ECO:0000314"/>
    <property type="project" value="GO_Central"/>
</dbReference>
<dbReference type="GO" id="GO:0030426">
    <property type="term" value="C:growth cone"/>
    <property type="evidence" value="ECO:0007669"/>
    <property type="project" value="Ensembl"/>
</dbReference>
<dbReference type="GO" id="GO:0005874">
    <property type="term" value="C:microtubule"/>
    <property type="evidence" value="ECO:0007669"/>
    <property type="project" value="UniProtKB-KW"/>
</dbReference>
<dbReference type="GO" id="GO:0043025">
    <property type="term" value="C:neuronal cell body"/>
    <property type="evidence" value="ECO:0007669"/>
    <property type="project" value="Ensembl"/>
</dbReference>
<dbReference type="GO" id="GO:0005886">
    <property type="term" value="C:plasma membrane"/>
    <property type="evidence" value="ECO:0007669"/>
    <property type="project" value="UniProtKB-SubCell"/>
</dbReference>
<dbReference type="GO" id="GO:0043015">
    <property type="term" value="F:gamma-tubulin binding"/>
    <property type="evidence" value="ECO:0007669"/>
    <property type="project" value="Ensembl"/>
</dbReference>
<dbReference type="GO" id="GO:0005080">
    <property type="term" value="F:protein kinase C binding"/>
    <property type="evidence" value="ECO:0007669"/>
    <property type="project" value="Ensembl"/>
</dbReference>
<dbReference type="GO" id="GO:0007411">
    <property type="term" value="P:axon guidance"/>
    <property type="evidence" value="ECO:0000304"/>
    <property type="project" value="ProtInc"/>
</dbReference>
<dbReference type="GO" id="GO:0007155">
    <property type="term" value="P:cell adhesion"/>
    <property type="evidence" value="ECO:0000304"/>
    <property type="project" value="ProtInc"/>
</dbReference>
<dbReference type="GO" id="GO:0071363">
    <property type="term" value="P:cellular response to growth factor stimulus"/>
    <property type="evidence" value="ECO:0007669"/>
    <property type="project" value="Ensembl"/>
</dbReference>
<dbReference type="GO" id="GO:0030010">
    <property type="term" value="P:establishment of cell polarity"/>
    <property type="evidence" value="ECO:0007669"/>
    <property type="project" value="Ensembl"/>
</dbReference>
<dbReference type="GO" id="GO:0051654">
    <property type="term" value="P:establishment of mitochondrion localization"/>
    <property type="evidence" value="ECO:0007669"/>
    <property type="project" value="Ensembl"/>
</dbReference>
<dbReference type="GO" id="GO:0021766">
    <property type="term" value="P:hippocampus development"/>
    <property type="evidence" value="ECO:0007669"/>
    <property type="project" value="Ensembl"/>
</dbReference>
<dbReference type="GO" id="GO:0007005">
    <property type="term" value="P:mitochondrion organization"/>
    <property type="evidence" value="ECO:0007669"/>
    <property type="project" value="Ensembl"/>
</dbReference>
<dbReference type="GO" id="GO:1902902">
    <property type="term" value="P:negative regulation of autophagosome assembly"/>
    <property type="evidence" value="ECO:0000315"/>
    <property type="project" value="GO_Central"/>
</dbReference>
<dbReference type="GO" id="GO:0007399">
    <property type="term" value="P:nervous system development"/>
    <property type="evidence" value="ECO:0000304"/>
    <property type="project" value="ProtInc"/>
</dbReference>
<dbReference type="GO" id="GO:0061881">
    <property type="term" value="P:positive regulation of anterograde axonal transport of mitochondrion"/>
    <property type="evidence" value="ECO:0007669"/>
    <property type="project" value="Ensembl"/>
</dbReference>
<dbReference type="GO" id="GO:0010976">
    <property type="term" value="P:positive regulation of neuron projection development"/>
    <property type="evidence" value="ECO:0007669"/>
    <property type="project" value="Ensembl"/>
</dbReference>
<dbReference type="InterPro" id="IPR011680">
    <property type="entry name" value="FEZ"/>
</dbReference>
<dbReference type="PANTHER" id="PTHR12394:SF4">
    <property type="entry name" value="FASCICULATION AND ELONGATION PROTEIN ZETA-1"/>
    <property type="match status" value="1"/>
</dbReference>
<dbReference type="PANTHER" id="PTHR12394">
    <property type="entry name" value="ZYGIN"/>
    <property type="match status" value="1"/>
</dbReference>
<dbReference type="Pfam" id="PF07763">
    <property type="entry name" value="FEZ"/>
    <property type="match status" value="1"/>
</dbReference>
<reference key="1">
    <citation type="journal article" date="1997" name="Proc. Natl. Acad. Sci. U.S.A.">
        <title>The Caenorhabditis elegans gene unc-76 and its human homologs define a new gene family involved in axonal outgrowth and fasciculation.</title>
        <authorList>
            <person name="Bloom L."/>
            <person name="Horvitz H.R."/>
        </authorList>
    </citation>
    <scope>NUCLEOTIDE SEQUENCE [MRNA] (ISOFORMS LONG AND SHORT)</scope>
</reference>
<reference key="2">
    <citation type="submission" date="1996-08" db="EMBL/GenBank/DDBJ databases">
        <title>Zigins: a family of synaptotagmin-interacting proteins related to unc-76.</title>
        <authorList>
            <person name="Sugita S."/>
            <person name="von Poser C."/>
            <person name="Rosahl T.W."/>
            <person name="Hata Y."/>
            <person name="Suedhof T.C."/>
        </authorList>
    </citation>
    <scope>NUCLEOTIDE SEQUENCE [MRNA] (ISOFORM LONG)</scope>
</reference>
<reference key="3">
    <citation type="submission" date="2004-06" db="EMBL/GenBank/DDBJ databases">
        <title>Cloning of human full open reading frames in Gateway(TM) system entry vector (pDONR201).</title>
        <authorList>
            <person name="Ebert L."/>
            <person name="Schick M."/>
            <person name="Neubert P."/>
            <person name="Schatten R."/>
            <person name="Henze S."/>
            <person name="Korn B."/>
        </authorList>
    </citation>
    <scope>NUCLEOTIDE SEQUENCE [LARGE SCALE MRNA] (ISOFORM LONG)</scope>
</reference>
<reference key="4">
    <citation type="submission" date="2004-06" db="EMBL/GenBank/DDBJ databases">
        <title>Cloning of human full open reading frames in Gateway(TM) system entry vector (pDONR201).</title>
        <authorList>
            <person name="Halleck A."/>
            <person name="Ebert L."/>
            <person name="Mkoundinya M."/>
            <person name="Schick M."/>
            <person name="Eisenstein S."/>
            <person name="Neubert P."/>
            <person name="Kstrang K."/>
            <person name="Schatten R."/>
            <person name="Shen B."/>
            <person name="Henze S."/>
            <person name="Mar W."/>
            <person name="Korn B."/>
            <person name="Zuo D."/>
            <person name="Hu Y."/>
            <person name="LaBaer J."/>
        </authorList>
    </citation>
    <scope>NUCLEOTIDE SEQUENCE [LARGE SCALE MRNA] (ISOFORM LONG)</scope>
</reference>
<reference key="5">
    <citation type="journal article" date="2004" name="Genome Res.">
        <title>The status, quality, and expansion of the NIH full-length cDNA project: the Mammalian Gene Collection (MGC).</title>
        <authorList>
            <consortium name="The MGC Project Team"/>
        </authorList>
    </citation>
    <scope>NUCLEOTIDE SEQUENCE [LARGE SCALE MRNA] (ISOFORM LONG)</scope>
    <source>
        <tissue>Pancreas</tissue>
    </source>
</reference>
<reference key="6">
    <citation type="journal article" date="2004" name="J. Biol. Chem.">
        <title>Functional regulation of FEZ1 by the U-box-type ubiquitin ligase E4B contributes to neuritogenesis.</title>
        <authorList>
            <person name="Okumura F."/>
            <person name="Hatakeyama S."/>
            <person name="Matsumoto M."/>
            <person name="Kamura T."/>
            <person name="Nakayama K."/>
        </authorList>
    </citation>
    <scope>INTERACTION WITH UBE4B</scope>
    <scope>PHOSPHORYLATION</scope>
    <scope>UBIQUITINATION</scope>
</reference>
<reference key="7">
    <citation type="journal article" date="2006" name="J. Biol. Chem.">
        <title>FEZ1 dimerization and interaction with transcription regulatory proteins involves its coiled-coil region.</title>
        <authorList>
            <person name="Assmann E.M."/>
            <person name="Alborghetti M.R."/>
            <person name="Camargo M.E.R."/>
            <person name="Kobarg J."/>
        </authorList>
    </citation>
    <scope>SUBUNIT</scope>
    <scope>INTERACTION WITH SAP30L</scope>
</reference>
<reference key="8">
    <citation type="journal article" date="2008" name="Exp. Cell Res.">
        <title>Over-expression of GFP-FEZ1 causes generation of multi-lobulated nuclei mediated by microtubules in HEK293 cells.</title>
        <authorList>
            <person name="Lanza D.C."/>
            <person name="Trindade D.M."/>
            <person name="Assmann E.M."/>
            <person name="Kobarg J."/>
        </authorList>
    </citation>
    <scope>SUBCELLULAR LOCATION</scope>
</reference>
<reference key="9">
    <citation type="journal article" date="2010" name="J. Proteome Res.">
        <title>Human FEZ1 protein forms a disulfide bond mediated dimer: implications for cargo transport.</title>
        <authorList>
            <person name="Alborghetti M.R."/>
            <person name="Furlan A.S."/>
            <person name="Silva J.C."/>
            <person name="Paes Leme A.F."/>
            <person name="Torriani I.C."/>
            <person name="Kobarg J."/>
        </authorList>
    </citation>
    <scope>FUNCTION</scope>
    <scope>SUBUNIT</scope>
    <scope>INTERACTION WITH SCOC</scope>
    <scope>DISULFIDE BOND</scope>
</reference>
<reference key="10">
    <citation type="journal article" date="2012" name="EMBO J.">
        <title>Genome-wide siRNA screen reveals amino acid starvation-induced autophagy requires SCOC and WAC.</title>
        <authorList>
            <person name="McKnight N.C."/>
            <person name="Jefferies H.B."/>
            <person name="Alemu E.A."/>
            <person name="Saunders R.E."/>
            <person name="Howell M."/>
            <person name="Johansen T."/>
            <person name="Tooze S.A."/>
        </authorList>
    </citation>
    <scope>FUNCTION</scope>
    <scope>INTERACTION WITH SCOC; ULK1 AND UVRAG</scope>
    <scope>MUTAGENESIS OF GLU-248; LEU-254; LEU-260 AND LYS-264</scope>
</reference>
<reference key="11">
    <citation type="journal article" date="2013" name="PLoS ONE">
        <title>Crystal structure of the human short coiled coil protein and insights into SCOC-FEZ1 complex formation.</title>
        <authorList>
            <person name="Behrens C."/>
            <person name="Binotti B."/>
            <person name="Schmidt C."/>
            <person name="Robinson C.V."/>
            <person name="Chua J.J."/>
            <person name="Kuhnel K."/>
        </authorList>
    </citation>
    <scope>INTERACTION WITH SCOC</scope>
</reference>
<accession>Q99689</accession>
<accession>O00679</accession>
<accession>O00728</accession>
<accession>Q6IBI7</accession>
<evidence type="ECO:0000250" key="1"/>
<evidence type="ECO:0000250" key="2">
    <source>
        <dbReference type="UniProtKB" id="P97577"/>
    </source>
</evidence>
<evidence type="ECO:0000250" key="3">
    <source>
        <dbReference type="UniProtKB" id="Q8K0X8"/>
    </source>
</evidence>
<evidence type="ECO:0000255" key="4"/>
<evidence type="ECO:0000256" key="5">
    <source>
        <dbReference type="SAM" id="MobiDB-lite"/>
    </source>
</evidence>
<evidence type="ECO:0000269" key="6">
    <source>
    </source>
</evidence>
<evidence type="ECO:0000269" key="7">
    <source>
    </source>
</evidence>
<evidence type="ECO:0000269" key="8">
    <source>
    </source>
</evidence>
<evidence type="ECO:0000269" key="9">
    <source>
    </source>
</evidence>
<evidence type="ECO:0000269" key="10">
    <source>
    </source>
</evidence>
<evidence type="ECO:0000269" key="11">
    <source>
    </source>
</evidence>
<evidence type="ECO:0000303" key="12">
    <source>
    </source>
</evidence>
<evidence type="ECO:0000305" key="13"/>
<keyword id="KW-0025">Alternative splicing</keyword>
<keyword id="KW-1003">Cell membrane</keyword>
<keyword id="KW-0175">Coiled coil</keyword>
<keyword id="KW-0963">Cytoplasm</keyword>
<keyword id="KW-0206">Cytoskeleton</keyword>
<keyword id="KW-1015">Disulfide bond</keyword>
<keyword id="KW-0472">Membrane</keyword>
<keyword id="KW-0493">Microtubule</keyword>
<keyword id="KW-0597">Phosphoprotein</keyword>
<keyword id="KW-1267">Proteomics identification</keyword>
<keyword id="KW-1185">Reference proteome</keyword>
<keyword id="KW-0813">Transport</keyword>
<keyword id="KW-0832">Ubl conjugation</keyword>
<name>FEZ1_HUMAN</name>
<protein>
    <recommendedName>
        <fullName>Fasciculation and elongation protein zeta-1</fullName>
    </recommendedName>
    <alternativeName>
        <fullName>Zygin I</fullName>
    </alternativeName>
    <alternativeName>
        <fullName>Zygin-1</fullName>
    </alternativeName>
</protein>